<protein>
    <recommendedName>
        <fullName>Solvent efflux pump outer membrane protein SrpC</fullName>
    </recommendedName>
</protein>
<reference key="1">
    <citation type="journal article" date="1998" name="J. Biol. Chem.">
        <title>Identification and molecular characterization of an efflux pump involved in Pseudomonas putida S12 solvent tolerance.</title>
        <authorList>
            <person name="Kieboom J."/>
            <person name="Dennis J.J."/>
            <person name="de Bont J.A.M."/>
            <person name="Zylstra G.J."/>
        </authorList>
    </citation>
    <scope>NUCLEOTIDE SEQUENCE [GENOMIC DNA]</scope>
    <scope>EFFLUX PUMP SUBSTRATES</scope>
    <source>
        <strain>ATCC 700801 / S12</strain>
    </source>
</reference>
<reference key="2">
    <citation type="journal article" date="1998" name="J. Bacteriol.">
        <title>Active efflux of organic solvents by Pseudomonas putida S12 is induced by solvents.</title>
        <authorList>
            <person name="Kieboom J."/>
            <person name="Dennis J.J."/>
            <person name="Zylstra G.J."/>
            <person name="de Bont J.A.M."/>
        </authorList>
    </citation>
    <scope>INDUCTION</scope>
    <source>
        <strain>ATCC 700801 / S12</strain>
    </source>
</reference>
<proteinExistence type="evidence at transcript level"/>
<gene>
    <name type="primary">srpC</name>
</gene>
<keyword id="KW-0998">Cell outer membrane</keyword>
<keyword id="KW-0449">Lipoprotein</keyword>
<keyword id="KW-0472">Membrane</keyword>
<keyword id="KW-0564">Palmitate</keyword>
<keyword id="KW-0732">Signal</keyword>
<keyword id="KW-0812">Transmembrane</keyword>
<keyword id="KW-1134">Transmembrane beta strand</keyword>
<keyword id="KW-0813">Transport</keyword>
<dbReference type="EMBL" id="AF029405">
    <property type="protein sequence ID" value="AAD12177.1"/>
    <property type="molecule type" value="Genomic_DNA"/>
</dbReference>
<dbReference type="RefSeq" id="WP_014003971.1">
    <property type="nucleotide sequence ID" value="NZ_SPUU01000035.1"/>
</dbReference>
<dbReference type="SMR" id="O31101"/>
<dbReference type="GO" id="GO:0009279">
    <property type="term" value="C:cell outer membrane"/>
    <property type="evidence" value="ECO:0007669"/>
    <property type="project" value="UniProtKB-SubCell"/>
</dbReference>
<dbReference type="GO" id="GO:0015562">
    <property type="term" value="F:efflux transmembrane transporter activity"/>
    <property type="evidence" value="ECO:0007669"/>
    <property type="project" value="InterPro"/>
</dbReference>
<dbReference type="Gene3D" id="1.20.1600.10">
    <property type="entry name" value="Outer membrane efflux proteins (OEP)"/>
    <property type="match status" value="1"/>
</dbReference>
<dbReference type="Gene3D" id="2.20.200.10">
    <property type="entry name" value="Outer membrane efflux proteins (OEP)"/>
    <property type="match status" value="1"/>
</dbReference>
<dbReference type="InterPro" id="IPR050737">
    <property type="entry name" value="OMF"/>
</dbReference>
<dbReference type="InterPro" id="IPR003423">
    <property type="entry name" value="OMP_efflux"/>
</dbReference>
<dbReference type="InterPro" id="IPR010131">
    <property type="entry name" value="RND_efflux_OM_lipoprot_NodT"/>
</dbReference>
<dbReference type="NCBIfam" id="TIGR01845">
    <property type="entry name" value="outer_NodT"/>
    <property type="match status" value="1"/>
</dbReference>
<dbReference type="PANTHER" id="PTHR30203:SF32">
    <property type="entry name" value="CATION EFFLUX SYSTEM PROTEIN CUSC"/>
    <property type="match status" value="1"/>
</dbReference>
<dbReference type="PANTHER" id="PTHR30203">
    <property type="entry name" value="OUTER MEMBRANE CATION EFFLUX PROTEIN"/>
    <property type="match status" value="1"/>
</dbReference>
<dbReference type="Pfam" id="PF02321">
    <property type="entry name" value="OEP"/>
    <property type="match status" value="2"/>
</dbReference>
<dbReference type="SUPFAM" id="SSF56954">
    <property type="entry name" value="Outer membrane efflux proteins (OEP)"/>
    <property type="match status" value="1"/>
</dbReference>
<dbReference type="PROSITE" id="PS51257">
    <property type="entry name" value="PROKAR_LIPOPROTEIN"/>
    <property type="match status" value="1"/>
</dbReference>
<name>SRPC_PSEPU</name>
<organism>
    <name type="scientific">Pseudomonas putida</name>
    <name type="common">Arthrobacter siderocapsulatus</name>
    <dbReference type="NCBI Taxonomy" id="303"/>
    <lineage>
        <taxon>Bacteria</taxon>
        <taxon>Pseudomonadati</taxon>
        <taxon>Pseudomonadota</taxon>
        <taxon>Gammaproteobacteria</taxon>
        <taxon>Pseudomonadales</taxon>
        <taxon>Pseudomonadaceae</taxon>
        <taxon>Pseudomonas</taxon>
    </lineage>
</organism>
<sequence length="470" mass="51387">MKFKSLPMFALLMLGGCSLIPDYQQPAAPMQAQWPTGQAYGGQGDQRSIATALPKAKEFFKDPALVRLLDAALENNRDLRIAAKNVESYRALYRIQRAERFPTLDGQASGNRTRLPDDLSPTGDSRIDSQYQVGLVTAYELDLFGRIRSLSNQALEKYLATEEAQRSVQIALIGDVATTYFLWRTDQALLELTEATLTSYVESLAMIESSAWAGTSSELDVRQARTLVNQAQAQQALYTRRIAQDVNALELLLGSKIPTDLPKNSPLAMSALGKVPAGLPADLLLNRPDIRSAEHQLMAANANIGAARAAFFPRISLTASAGSASSDLDGLFNSGSDSWSFAPQISVPIFNAGKLRANLDYAELQKDVGVATYEKSIQTAFREVADGLAARGTYGKQLSAQSELVDNYKAYFSLAQQRYDQGVDSYLTVLDAQRELFSSQQKLLNDQLDQINSEVQLYKALGGGWSVSQN</sequence>
<evidence type="ECO:0000255" key="1">
    <source>
        <dbReference type="PROSITE-ProRule" id="PRU00303"/>
    </source>
</evidence>
<evidence type="ECO:0000256" key="2">
    <source>
        <dbReference type="SAM" id="MobiDB-lite"/>
    </source>
</evidence>
<evidence type="ECO:0000269" key="3">
    <source>
    </source>
</evidence>
<evidence type="ECO:0000305" key="4"/>
<accession>O31101</accession>
<comment type="function">
    <text>The outer membrane component of an organic solvent efflux pump. Involved in export of a number of low log POW compounds including hexane (log POW 3.5), toluene (log POW 2.5) and dimethylphthalate (log POW 2.3). The solvent resistance phenotype has been postulated to depend on the operon expression level.</text>
</comment>
<comment type="subcellular location">
    <subcellularLocation>
        <location evidence="4">Cell outer membrane</location>
        <topology evidence="1">Lipid-anchor</topology>
    </subcellularLocation>
</comment>
<comment type="induction">
    <text evidence="3">Low constitutive expression; the srpABC operon is further induced up to 17-fold by organic solvents (e.g. toluene and aliphatic solvents and alcohols) but not by antibiotics, heavy metals, pH, temperature, high NaCl or 60 mM acetic acid.</text>
</comment>
<comment type="similarity">
    <text evidence="4">Belongs to the outer membrane factor (OMF) (TC 1.B.17) family.</text>
</comment>
<feature type="signal peptide" evidence="1">
    <location>
        <begin position="1"/>
        <end position="16"/>
    </location>
</feature>
<feature type="chain" id="PRO_0000031008" description="Solvent efflux pump outer membrane protein SrpC">
    <location>
        <begin position="17"/>
        <end position="470"/>
    </location>
</feature>
<feature type="region of interest" description="Disordered" evidence="2">
    <location>
        <begin position="104"/>
        <end position="123"/>
    </location>
</feature>
<feature type="lipid moiety-binding region" description="N-palmitoyl cysteine" evidence="1">
    <location>
        <position position="17"/>
    </location>
</feature>
<feature type="lipid moiety-binding region" description="S-diacylglycerol cysteine" evidence="1">
    <location>
        <position position="17"/>
    </location>
</feature>